<comment type="function">
    <text evidence="1">May cause loosening and extension of plant cell walls by disrupting non-covalent bonding between cellulose microfibrils and matrix glucans. No enzymatic activity has been found. May be required for rapid internodal elongation in deepwater rice during submergence (By similarity).</text>
</comment>
<comment type="subcellular location">
    <subcellularLocation>
        <location evidence="1">Secreted</location>
        <location evidence="1">Cell wall</location>
    </subcellularLocation>
    <subcellularLocation>
        <location evidence="1">Membrane</location>
        <topology evidence="1">Peripheral membrane protein</topology>
    </subcellularLocation>
</comment>
<comment type="similarity">
    <text evidence="5">Belongs to the expansin family. Expansin A subfamily.</text>
</comment>
<comment type="online information" name="EXPANSIN homepage">
    <link uri="https://www.dept.psu.edu/biology/groups/expansins/index.htm"/>
</comment>
<gene>
    <name type="primary">EXPA28</name>
    <name type="synonym">EXP28</name>
    <name type="ordered locus">Os10g0439200</name>
    <name type="ordered locus">LOC_Os10g30340</name>
</gene>
<protein>
    <recommendedName>
        <fullName>Expansin-A28</fullName>
    </recommendedName>
    <alternativeName>
        <fullName>Alpha-expansin-28</fullName>
    </alternativeName>
    <alternativeName>
        <fullName>OsEXP28</fullName>
    </alternativeName>
    <alternativeName>
        <fullName>OsEXPA28</fullName>
    </alternativeName>
    <alternativeName>
        <fullName>OsaEXPa1.7</fullName>
    </alternativeName>
</protein>
<reference key="1">
    <citation type="journal article" date="2003" name="Science">
        <title>In-depth view of structure, activity, and evolution of rice chromosome 10.</title>
        <authorList>
            <person name="Yu Y."/>
            <person name="Rambo T."/>
            <person name="Currie J."/>
            <person name="Saski C."/>
            <person name="Kim H.-R."/>
            <person name="Collura K."/>
            <person name="Thompson S."/>
            <person name="Simmons J."/>
            <person name="Yang T.-J."/>
            <person name="Nah G."/>
            <person name="Patel A.J."/>
            <person name="Thurmond S."/>
            <person name="Henry D."/>
            <person name="Oates R."/>
            <person name="Palmer M."/>
            <person name="Pries G."/>
            <person name="Gibson J."/>
            <person name="Anderson H."/>
            <person name="Paradkar M."/>
            <person name="Crane L."/>
            <person name="Dale J."/>
            <person name="Carver M.B."/>
            <person name="Wood T."/>
            <person name="Frisch D."/>
            <person name="Engler F."/>
            <person name="Soderlund C."/>
            <person name="Palmer L.E."/>
            <person name="Teytelman L."/>
            <person name="Nascimento L."/>
            <person name="De la Bastide M."/>
            <person name="Spiegel L."/>
            <person name="Ware D."/>
            <person name="O'Shaughnessy A."/>
            <person name="Dike S."/>
            <person name="Dedhia N."/>
            <person name="Preston R."/>
            <person name="Huang E."/>
            <person name="Ferraro K."/>
            <person name="Kuit K."/>
            <person name="Miller B."/>
            <person name="Zutavern T."/>
            <person name="Katzenberger F."/>
            <person name="Muller S."/>
            <person name="Balija V."/>
            <person name="Martienssen R.A."/>
            <person name="Stein L."/>
            <person name="Minx P."/>
            <person name="Johnson D."/>
            <person name="Cordum H."/>
            <person name="Mardis E."/>
            <person name="Cheng Z."/>
            <person name="Jiang J."/>
            <person name="Wilson R."/>
            <person name="McCombie W.R."/>
            <person name="Wing R.A."/>
            <person name="Yuan Q."/>
            <person name="Ouyang S."/>
            <person name="Liu J."/>
            <person name="Jones K.M."/>
            <person name="Gansberger K."/>
            <person name="Moffat K."/>
            <person name="Hill J."/>
            <person name="Tsitrin T."/>
            <person name="Overton L."/>
            <person name="Bera J."/>
            <person name="Kim M."/>
            <person name="Jin S."/>
            <person name="Tallon L."/>
            <person name="Ciecko A."/>
            <person name="Pai G."/>
            <person name="Van Aken S."/>
            <person name="Utterback T."/>
            <person name="Reidmuller S."/>
            <person name="Bormann J."/>
            <person name="Feldblyum T."/>
            <person name="Hsiao J."/>
            <person name="Zismann V."/>
            <person name="Blunt S."/>
            <person name="de Vazeille A.R."/>
            <person name="Shaffer T."/>
            <person name="Koo H."/>
            <person name="Suh B."/>
            <person name="Yang Q."/>
            <person name="Haas B."/>
            <person name="Peterson J."/>
            <person name="Pertea M."/>
            <person name="Volfovsky N."/>
            <person name="Wortman J."/>
            <person name="White O."/>
            <person name="Salzberg S.L."/>
            <person name="Fraser C.M."/>
            <person name="Buell C.R."/>
            <person name="Messing J."/>
            <person name="Song R."/>
            <person name="Fuks G."/>
            <person name="Llaca V."/>
            <person name="Kovchak S."/>
            <person name="Young S."/>
            <person name="Bowers J.E."/>
            <person name="Paterson A.H."/>
            <person name="Johns M.A."/>
            <person name="Mao L."/>
            <person name="Pan H."/>
            <person name="Dean R.A."/>
        </authorList>
    </citation>
    <scope>NUCLEOTIDE SEQUENCE [LARGE SCALE GENOMIC DNA]</scope>
    <source>
        <strain>cv. Nipponbare</strain>
    </source>
</reference>
<reference key="2">
    <citation type="journal article" date="2005" name="Nature">
        <title>The map-based sequence of the rice genome.</title>
        <authorList>
            <consortium name="International rice genome sequencing project (IRGSP)"/>
        </authorList>
    </citation>
    <scope>NUCLEOTIDE SEQUENCE [LARGE SCALE GENOMIC DNA]</scope>
    <source>
        <strain>cv. Nipponbare</strain>
    </source>
</reference>
<reference key="3">
    <citation type="journal article" date="2008" name="Nucleic Acids Res.">
        <title>The rice annotation project database (RAP-DB): 2008 update.</title>
        <authorList>
            <consortium name="The rice annotation project (RAP)"/>
        </authorList>
    </citation>
    <scope>GENOME REANNOTATION</scope>
    <source>
        <strain>cv. Nipponbare</strain>
    </source>
</reference>
<reference key="4">
    <citation type="journal article" date="2013" name="Rice">
        <title>Improvement of the Oryza sativa Nipponbare reference genome using next generation sequence and optical map data.</title>
        <authorList>
            <person name="Kawahara Y."/>
            <person name="de la Bastide M."/>
            <person name="Hamilton J.P."/>
            <person name="Kanamori H."/>
            <person name="McCombie W.R."/>
            <person name="Ouyang S."/>
            <person name="Schwartz D.C."/>
            <person name="Tanaka T."/>
            <person name="Wu J."/>
            <person name="Zhou S."/>
            <person name="Childs K.L."/>
            <person name="Davidson R.M."/>
            <person name="Lin H."/>
            <person name="Quesada-Ocampo L."/>
            <person name="Vaillancourt B."/>
            <person name="Sakai H."/>
            <person name="Lee S.S."/>
            <person name="Kim J."/>
            <person name="Numa H."/>
            <person name="Itoh T."/>
            <person name="Buell C.R."/>
            <person name="Matsumoto T."/>
        </authorList>
    </citation>
    <scope>GENOME REANNOTATION</scope>
    <source>
        <strain>cv. Nipponbare</strain>
    </source>
</reference>
<reference key="5">
    <citation type="journal article" date="2005" name="Mol. Cells">
        <title>Characterization and transcriptional expression of the alpha-expansin gene family in rice.</title>
        <authorList>
            <person name="Shin J.-H."/>
            <person name="Jeong D.-H."/>
            <person name="Park M.C."/>
            <person name="An G."/>
        </authorList>
    </citation>
    <scope>NUCLEOTIDE SEQUENCE [MRNA] OF 5-249</scope>
    <source>
        <strain>cv. Dongjin</strain>
    </source>
</reference>
<reference key="6">
    <citation type="journal article" date="2004" name="Plant Mol. Biol.">
        <title>Nomenclature for members of the expansin superfamily of genes and proteins.</title>
        <authorList>
            <person name="Kende H."/>
            <person name="Bradford K.J."/>
            <person name="Brummell D.A."/>
            <person name="Cho H.-T."/>
            <person name="Cosgrove D.J."/>
            <person name="Fleming A.J."/>
            <person name="Gehring C."/>
            <person name="Lee Y."/>
            <person name="McQueen-Mason S.J."/>
            <person name="Rose J.K.C."/>
            <person name="Voesenek L.A.C."/>
        </authorList>
    </citation>
    <scope>NOMENCLATURE</scope>
</reference>
<name>EXP28_ORYSJ</name>
<feature type="signal peptide" evidence="2">
    <location>
        <begin position="1"/>
        <end position="21"/>
    </location>
</feature>
<feature type="chain" id="PRO_0000252007" description="Expansin-A28">
    <location>
        <begin position="22"/>
        <end position="255"/>
    </location>
</feature>
<feature type="domain" description="Expansin-like EG45" evidence="4">
    <location>
        <begin position="45"/>
        <end position="160"/>
    </location>
</feature>
<feature type="domain" description="Expansin-like CBD" evidence="3">
    <location>
        <begin position="170"/>
        <end position="249"/>
    </location>
</feature>
<evidence type="ECO:0000250" key="1"/>
<evidence type="ECO:0000255" key="2"/>
<evidence type="ECO:0000255" key="3">
    <source>
        <dbReference type="PROSITE-ProRule" id="PRU00078"/>
    </source>
</evidence>
<evidence type="ECO:0000255" key="4">
    <source>
        <dbReference type="PROSITE-ProRule" id="PRU00079"/>
    </source>
</evidence>
<evidence type="ECO:0000305" key="5"/>
<sequence>MMVIRFFAVLAAALCITSASAAAAGGWVSGTATFYGGKDASGTMGGACGYGNLYTQGYGVYNAALSTALFNGGASCGQCYLIMCDASKTPEWCKAGTAVTITATNLCPPNWALANDDGGWCNPPRPHFDMSQPAWETIGIYRAGIVPVLYQQVKCWRQGGVRFTVSGFNYFELVLITNVAGSGSVQAMSVKGSKTGWIPLARNWGANWQCNSALVGQALSFRVTSTGGQTLQINSVVPEWWEFGTTFTSNQQFDY</sequence>
<dbReference type="EMBL" id="DP000086">
    <property type="protein sequence ID" value="AAP53956.1"/>
    <property type="molecule type" value="Genomic_DNA"/>
</dbReference>
<dbReference type="EMBL" id="AP008216">
    <property type="protein sequence ID" value="BAF26599.1"/>
    <property type="molecule type" value="Genomic_DNA"/>
</dbReference>
<dbReference type="EMBL" id="AP014966">
    <property type="status" value="NOT_ANNOTATED_CDS"/>
    <property type="molecule type" value="Genomic_DNA"/>
</dbReference>
<dbReference type="EMBL" id="DQ061067">
    <property type="protein sequence ID" value="AAY63558.1"/>
    <property type="molecule type" value="mRNA"/>
</dbReference>
<dbReference type="RefSeq" id="XP_015613768.1">
    <property type="nucleotide sequence ID" value="XM_015758282.1"/>
</dbReference>
<dbReference type="SMR" id="Q4PR40"/>
<dbReference type="FunCoup" id="Q4PR40">
    <property type="interactions" value="14"/>
</dbReference>
<dbReference type="STRING" id="39947.Q4PR40"/>
<dbReference type="PaxDb" id="39947-Q4PR40"/>
<dbReference type="KEGG" id="dosa:Os10g0439200"/>
<dbReference type="eggNOG" id="ENOG502QVVV">
    <property type="taxonomic scope" value="Eukaryota"/>
</dbReference>
<dbReference type="HOGENOM" id="CLU_027462_0_3_1"/>
<dbReference type="InParanoid" id="Q4PR40"/>
<dbReference type="OrthoDB" id="594519at2759"/>
<dbReference type="Proteomes" id="UP000000763">
    <property type="component" value="Chromosome 10"/>
</dbReference>
<dbReference type="Proteomes" id="UP000059680">
    <property type="component" value="Chromosome 10"/>
</dbReference>
<dbReference type="GO" id="GO:0005576">
    <property type="term" value="C:extracellular region"/>
    <property type="evidence" value="ECO:0007669"/>
    <property type="project" value="UniProtKB-KW"/>
</dbReference>
<dbReference type="GO" id="GO:0016020">
    <property type="term" value="C:membrane"/>
    <property type="evidence" value="ECO:0007669"/>
    <property type="project" value="UniProtKB-SubCell"/>
</dbReference>
<dbReference type="GO" id="GO:0009828">
    <property type="term" value="P:plant-type cell wall loosening"/>
    <property type="evidence" value="ECO:0000250"/>
    <property type="project" value="UniProtKB"/>
</dbReference>
<dbReference type="CDD" id="cd22274">
    <property type="entry name" value="DPBB_EXPA_N"/>
    <property type="match status" value="1"/>
</dbReference>
<dbReference type="Gene3D" id="2.60.40.760">
    <property type="entry name" value="Expansin, cellulose-binding-like domain"/>
    <property type="match status" value="1"/>
</dbReference>
<dbReference type="Gene3D" id="2.40.40.10">
    <property type="entry name" value="RlpA-like domain"/>
    <property type="match status" value="1"/>
</dbReference>
<dbReference type="InterPro" id="IPR007118">
    <property type="entry name" value="Expan_Lol_pI"/>
</dbReference>
<dbReference type="InterPro" id="IPR002963">
    <property type="entry name" value="Expansin"/>
</dbReference>
<dbReference type="InterPro" id="IPR007112">
    <property type="entry name" value="Expansin/allergen_DPBB_dom"/>
</dbReference>
<dbReference type="InterPro" id="IPR007117">
    <property type="entry name" value="Expansin_CBD"/>
</dbReference>
<dbReference type="InterPro" id="IPR036749">
    <property type="entry name" value="Expansin_CBD_sf"/>
</dbReference>
<dbReference type="InterPro" id="IPR009009">
    <property type="entry name" value="RlpA-like_DPBB"/>
</dbReference>
<dbReference type="InterPro" id="IPR036908">
    <property type="entry name" value="RlpA-like_sf"/>
</dbReference>
<dbReference type="PANTHER" id="PTHR31867">
    <property type="entry name" value="EXPANSIN-A15"/>
    <property type="match status" value="1"/>
</dbReference>
<dbReference type="Pfam" id="PF03330">
    <property type="entry name" value="DPBB_1"/>
    <property type="match status" value="1"/>
</dbReference>
<dbReference type="Pfam" id="PF01357">
    <property type="entry name" value="Expansin_C"/>
    <property type="match status" value="1"/>
</dbReference>
<dbReference type="PRINTS" id="PR01226">
    <property type="entry name" value="EXPANSIN"/>
</dbReference>
<dbReference type="PRINTS" id="PR01225">
    <property type="entry name" value="EXPANSNFAMLY"/>
</dbReference>
<dbReference type="SMART" id="SM00837">
    <property type="entry name" value="DPBB_1"/>
    <property type="match status" value="1"/>
</dbReference>
<dbReference type="SUPFAM" id="SSF50685">
    <property type="entry name" value="Barwin-like endoglucanases"/>
    <property type="match status" value="1"/>
</dbReference>
<dbReference type="SUPFAM" id="SSF49590">
    <property type="entry name" value="PHL pollen allergen"/>
    <property type="match status" value="1"/>
</dbReference>
<dbReference type="PROSITE" id="PS50843">
    <property type="entry name" value="EXPANSIN_CBD"/>
    <property type="match status" value="1"/>
</dbReference>
<dbReference type="PROSITE" id="PS50842">
    <property type="entry name" value="EXPANSIN_EG45"/>
    <property type="match status" value="1"/>
</dbReference>
<accession>Q4PR40</accession>
<accession>Q7XE34</accession>
<proteinExistence type="evidence at transcript level"/>
<keyword id="KW-0134">Cell wall</keyword>
<keyword id="KW-0961">Cell wall biogenesis/degradation</keyword>
<keyword id="KW-0472">Membrane</keyword>
<keyword id="KW-1185">Reference proteome</keyword>
<keyword id="KW-0964">Secreted</keyword>
<keyword id="KW-0732">Signal</keyword>
<organism>
    <name type="scientific">Oryza sativa subsp. japonica</name>
    <name type="common">Rice</name>
    <dbReference type="NCBI Taxonomy" id="39947"/>
    <lineage>
        <taxon>Eukaryota</taxon>
        <taxon>Viridiplantae</taxon>
        <taxon>Streptophyta</taxon>
        <taxon>Embryophyta</taxon>
        <taxon>Tracheophyta</taxon>
        <taxon>Spermatophyta</taxon>
        <taxon>Magnoliopsida</taxon>
        <taxon>Liliopsida</taxon>
        <taxon>Poales</taxon>
        <taxon>Poaceae</taxon>
        <taxon>BOP clade</taxon>
        <taxon>Oryzoideae</taxon>
        <taxon>Oryzeae</taxon>
        <taxon>Oryzinae</taxon>
        <taxon>Oryza</taxon>
        <taxon>Oryza sativa</taxon>
    </lineage>
</organism>